<gene>
    <name evidence="1" type="primary">PRT1</name>
    <name type="ordered locus">CAALFM_C701450CA</name>
    <name type="ORF">CaO19.13937</name>
    <name type="ORF">CaO19.6584</name>
</gene>
<feature type="chain" id="PRO_0000363813" description="Eukaryotic translation initiation factor 3 subunit B">
    <location>
        <begin position="1"/>
        <end position="739"/>
    </location>
</feature>
<feature type="domain" description="RRM" evidence="1">
    <location>
        <begin position="37"/>
        <end position="124"/>
    </location>
</feature>
<feature type="repeat" description="WD 1">
    <location>
        <begin position="190"/>
        <end position="229"/>
    </location>
</feature>
<feature type="repeat" description="WD 2">
    <location>
        <begin position="231"/>
        <end position="293"/>
    </location>
</feature>
<feature type="repeat" description="WD 3">
    <location>
        <begin position="301"/>
        <end position="339"/>
    </location>
</feature>
<feature type="repeat" description="WD 4">
    <location>
        <begin position="343"/>
        <end position="385"/>
    </location>
</feature>
<feature type="repeat" description="WD 5">
    <location>
        <begin position="453"/>
        <end position="502"/>
    </location>
</feature>
<feature type="repeat" description="WD 6">
    <location>
        <begin position="537"/>
        <end position="579"/>
    </location>
</feature>
<feature type="repeat" description="WD 7">
    <location>
        <begin position="592"/>
        <end position="630"/>
    </location>
</feature>
<feature type="region of interest" description="Sufficient for interaction with PIC8" evidence="1">
    <location>
        <begin position="1"/>
        <end position="224"/>
    </location>
</feature>
<feature type="region of interest" description="Sufficient for interaction with HCR1 and TIF32" evidence="1">
    <location>
        <begin position="1"/>
        <end position="98"/>
    </location>
</feature>
<reference key="1">
    <citation type="journal article" date="2004" name="Proc. Natl. Acad. Sci. U.S.A.">
        <title>The diploid genome sequence of Candida albicans.</title>
        <authorList>
            <person name="Jones T."/>
            <person name="Federspiel N.A."/>
            <person name="Chibana H."/>
            <person name="Dungan J."/>
            <person name="Kalman S."/>
            <person name="Magee B.B."/>
            <person name="Newport G."/>
            <person name="Thorstenson Y.R."/>
            <person name="Agabian N."/>
            <person name="Magee P.T."/>
            <person name="Davis R.W."/>
            <person name="Scherer S."/>
        </authorList>
    </citation>
    <scope>NUCLEOTIDE SEQUENCE [LARGE SCALE GENOMIC DNA]</scope>
    <source>
        <strain>SC5314 / ATCC MYA-2876</strain>
    </source>
</reference>
<reference key="2">
    <citation type="journal article" date="2007" name="Genome Biol.">
        <title>Assembly of the Candida albicans genome into sixteen supercontigs aligned on the eight chromosomes.</title>
        <authorList>
            <person name="van het Hoog M."/>
            <person name="Rast T.J."/>
            <person name="Martchenko M."/>
            <person name="Grindle S."/>
            <person name="Dignard D."/>
            <person name="Hogues H."/>
            <person name="Cuomo C."/>
            <person name="Berriman M."/>
            <person name="Scherer S."/>
            <person name="Magee B.B."/>
            <person name="Whiteway M."/>
            <person name="Chibana H."/>
            <person name="Nantel A."/>
            <person name="Magee P.T."/>
        </authorList>
    </citation>
    <scope>GENOME REANNOTATION</scope>
    <source>
        <strain>SC5314 / ATCC MYA-2876</strain>
    </source>
</reference>
<reference key="3">
    <citation type="journal article" date="2013" name="Genome Biol.">
        <title>Assembly of a phased diploid Candida albicans genome facilitates allele-specific measurements and provides a simple model for repeat and indel structure.</title>
        <authorList>
            <person name="Muzzey D."/>
            <person name="Schwartz K."/>
            <person name="Weissman J.S."/>
            <person name="Sherlock G."/>
        </authorList>
    </citation>
    <scope>NUCLEOTIDE SEQUENCE [LARGE SCALE GENOMIC DNA]</scope>
    <scope>GENOME REANNOTATION</scope>
    <source>
        <strain>SC5314 / ATCC MYA-2876</strain>
    </source>
</reference>
<reference key="4">
    <citation type="journal article" date="2005" name="Genetics">
        <title>Sequence finishing and gene mapping for Candida albicans chromosome 7 and syntenic analysis against the Saccharomyces cerevisiae genome.</title>
        <authorList>
            <person name="Chibana H."/>
            <person name="Oka N."/>
            <person name="Nakayama H."/>
            <person name="Aoyama T."/>
            <person name="Magee B.B."/>
            <person name="Magee P.T."/>
            <person name="Mikami Y."/>
        </authorList>
    </citation>
    <scope>NUCLEOTIDE SEQUENCE [LARGE SCALE GENOMIC DNA]</scope>
    <source>
        <strain>SC5314 / ATCC MYA-2876</strain>
    </source>
</reference>
<dbReference type="EMBL" id="CP017629">
    <property type="protein sequence ID" value="AOW30512.1"/>
    <property type="molecule type" value="Genomic_DNA"/>
</dbReference>
<dbReference type="EMBL" id="AP006852">
    <property type="protein sequence ID" value="BAE44665.1"/>
    <property type="molecule type" value="Genomic_DNA"/>
</dbReference>
<dbReference type="RefSeq" id="XP_721420.1">
    <property type="nucleotide sequence ID" value="XM_716327.1"/>
</dbReference>
<dbReference type="SMR" id="Q5AGV4"/>
<dbReference type="FunCoup" id="Q5AGV4">
    <property type="interactions" value="1407"/>
</dbReference>
<dbReference type="STRING" id="237561.Q5AGV4"/>
<dbReference type="EnsemblFungi" id="C7_01450C_A-T">
    <property type="protein sequence ID" value="C7_01450C_A-T-p1"/>
    <property type="gene ID" value="C7_01450C_A"/>
</dbReference>
<dbReference type="GeneID" id="3636959"/>
<dbReference type="KEGG" id="cal:CAALFM_C701450CA"/>
<dbReference type="CGD" id="CAL0000183631">
    <property type="gene designation" value="PRT1"/>
</dbReference>
<dbReference type="VEuPathDB" id="FungiDB:C7_01450C_A"/>
<dbReference type="eggNOG" id="KOG2314">
    <property type="taxonomic scope" value="Eukaryota"/>
</dbReference>
<dbReference type="HOGENOM" id="CLU_011152_4_0_1"/>
<dbReference type="InParanoid" id="Q5AGV4"/>
<dbReference type="OMA" id="LWGGPQF"/>
<dbReference type="OrthoDB" id="10250414at2759"/>
<dbReference type="Proteomes" id="UP000000559">
    <property type="component" value="Chromosome 7"/>
</dbReference>
<dbReference type="GO" id="GO:0010494">
    <property type="term" value="C:cytoplasmic stress granule"/>
    <property type="evidence" value="ECO:0007669"/>
    <property type="project" value="EnsemblFungi"/>
</dbReference>
<dbReference type="GO" id="GO:0016282">
    <property type="term" value="C:eukaryotic 43S preinitiation complex"/>
    <property type="evidence" value="ECO:0007669"/>
    <property type="project" value="UniProtKB-UniRule"/>
</dbReference>
<dbReference type="GO" id="GO:0033290">
    <property type="term" value="C:eukaryotic 48S preinitiation complex"/>
    <property type="evidence" value="ECO:0007669"/>
    <property type="project" value="UniProtKB-UniRule"/>
</dbReference>
<dbReference type="GO" id="GO:0005852">
    <property type="term" value="C:eukaryotic translation initiation factor 3 complex"/>
    <property type="evidence" value="ECO:0000318"/>
    <property type="project" value="GO_Central"/>
</dbReference>
<dbReference type="GO" id="GO:0071540">
    <property type="term" value="C:eukaryotic translation initiation factor 3 complex, eIF3e"/>
    <property type="evidence" value="ECO:0007669"/>
    <property type="project" value="EnsemblFungi"/>
</dbReference>
<dbReference type="GO" id="GO:0071541">
    <property type="term" value="C:eukaryotic translation initiation factor 3 complex, eIF3m"/>
    <property type="evidence" value="ECO:0007669"/>
    <property type="project" value="EnsemblFungi"/>
</dbReference>
<dbReference type="GO" id="GO:0062040">
    <property type="term" value="C:fungal biofilm matrix"/>
    <property type="evidence" value="ECO:0000314"/>
    <property type="project" value="CGD"/>
</dbReference>
<dbReference type="GO" id="GO:0009277">
    <property type="term" value="C:fungal-type cell wall"/>
    <property type="evidence" value="ECO:0000314"/>
    <property type="project" value="CGD"/>
</dbReference>
<dbReference type="GO" id="GO:0043614">
    <property type="term" value="C:multi-eIF complex"/>
    <property type="evidence" value="ECO:0007669"/>
    <property type="project" value="EnsemblFungi"/>
</dbReference>
<dbReference type="GO" id="GO:0042802">
    <property type="term" value="F:identical protein binding"/>
    <property type="evidence" value="ECO:0007669"/>
    <property type="project" value="EnsemblFungi"/>
</dbReference>
<dbReference type="GO" id="GO:0003723">
    <property type="term" value="F:RNA binding"/>
    <property type="evidence" value="ECO:0007669"/>
    <property type="project" value="UniProtKB-UniRule"/>
</dbReference>
<dbReference type="GO" id="GO:0003743">
    <property type="term" value="F:translation initiation factor activity"/>
    <property type="evidence" value="ECO:0007669"/>
    <property type="project" value="UniProtKB-UniRule"/>
</dbReference>
<dbReference type="GO" id="GO:0031369">
    <property type="term" value="F:translation initiation factor binding"/>
    <property type="evidence" value="ECO:0007669"/>
    <property type="project" value="InterPro"/>
</dbReference>
<dbReference type="GO" id="GO:0001732">
    <property type="term" value="P:formation of cytoplasmic translation initiation complex"/>
    <property type="evidence" value="ECO:0007669"/>
    <property type="project" value="UniProtKB-UniRule"/>
</dbReference>
<dbReference type="GO" id="GO:0006413">
    <property type="term" value="P:translational initiation"/>
    <property type="evidence" value="ECO:0000318"/>
    <property type="project" value="GO_Central"/>
</dbReference>
<dbReference type="CDD" id="cd12278">
    <property type="entry name" value="RRM_eIF3B"/>
    <property type="match status" value="1"/>
</dbReference>
<dbReference type="FunFam" id="3.30.70.330:FF:000235">
    <property type="entry name" value="Eukaryotic translation initiation factor 3 subunit B"/>
    <property type="match status" value="1"/>
</dbReference>
<dbReference type="Gene3D" id="3.30.70.330">
    <property type="match status" value="1"/>
</dbReference>
<dbReference type="Gene3D" id="2.130.10.10">
    <property type="entry name" value="YVTN repeat-like/Quinoprotein amine dehydrogenase"/>
    <property type="match status" value="1"/>
</dbReference>
<dbReference type="HAMAP" id="MF_03001">
    <property type="entry name" value="eIF3b"/>
    <property type="match status" value="1"/>
</dbReference>
<dbReference type="InterPro" id="IPR011400">
    <property type="entry name" value="EIF3B"/>
</dbReference>
<dbReference type="InterPro" id="IPR034363">
    <property type="entry name" value="eIF3B_RRM"/>
</dbReference>
<dbReference type="InterPro" id="IPR012677">
    <property type="entry name" value="Nucleotide-bd_a/b_plait_sf"/>
</dbReference>
<dbReference type="InterPro" id="IPR035979">
    <property type="entry name" value="RBD_domain_sf"/>
</dbReference>
<dbReference type="InterPro" id="IPR000504">
    <property type="entry name" value="RRM_dom"/>
</dbReference>
<dbReference type="InterPro" id="IPR013979">
    <property type="entry name" value="TIF_beta_prop-like"/>
</dbReference>
<dbReference type="InterPro" id="IPR015943">
    <property type="entry name" value="WD40/YVTN_repeat-like_dom_sf"/>
</dbReference>
<dbReference type="PANTHER" id="PTHR14068">
    <property type="entry name" value="EUKARYOTIC TRANSLATION INITIATION FACTOR 3 EIF3 -RELATED"/>
    <property type="match status" value="1"/>
</dbReference>
<dbReference type="PANTHER" id="PTHR14068:SF0">
    <property type="entry name" value="EUKARYOTIC TRANSLATION INITIATION FACTOR 3 SUBUNIT B"/>
    <property type="match status" value="1"/>
</dbReference>
<dbReference type="Pfam" id="PF08662">
    <property type="entry name" value="eIF2A"/>
    <property type="match status" value="2"/>
</dbReference>
<dbReference type="Pfam" id="PF00076">
    <property type="entry name" value="RRM_1"/>
    <property type="match status" value="1"/>
</dbReference>
<dbReference type="PIRSF" id="PIRSF036424">
    <property type="entry name" value="eIF3b"/>
    <property type="match status" value="1"/>
</dbReference>
<dbReference type="SMART" id="SM00360">
    <property type="entry name" value="RRM"/>
    <property type="match status" value="1"/>
</dbReference>
<dbReference type="SUPFAM" id="SSF82171">
    <property type="entry name" value="DPP6 N-terminal domain-like"/>
    <property type="match status" value="1"/>
</dbReference>
<dbReference type="SUPFAM" id="SSF54928">
    <property type="entry name" value="RNA-binding domain, RBD"/>
    <property type="match status" value="1"/>
</dbReference>
<dbReference type="PROSITE" id="PS50102">
    <property type="entry name" value="RRM"/>
    <property type="match status" value="1"/>
</dbReference>
<evidence type="ECO:0000255" key="1">
    <source>
        <dbReference type="HAMAP-Rule" id="MF_03001"/>
    </source>
</evidence>
<protein>
    <recommendedName>
        <fullName evidence="1">Eukaryotic translation initiation factor 3 subunit B</fullName>
        <shortName evidence="1">eIF3b</shortName>
    </recommendedName>
    <alternativeName>
        <fullName evidence="1">Eukaryotic translation initiation factor 3 90 kDa subunit homolog</fullName>
        <shortName evidence="1">eIF3 p90</shortName>
    </alternativeName>
    <alternativeName>
        <fullName>Translation initiation factor eIF3 p90 subunit homolog</fullName>
    </alternativeName>
</protein>
<sequence length="739" mass="84252">MSINEEDYLQLEKEIKLDDIDFSDLEEKYEVNIGLDNYIIVDGAPIAPEAKVPVLIKVLRKLFSQVGEIVEGDEGIYMPLENGKSKGYLFIQFKSTESADLAIKKLHGKKLDQNHRLLVNKLSDMEKYGVDGAVNEEFIEPEIEPFQSHGYLKSWLQDEQGRDQMVLHFSETVGVYWNKKSADPEPVIEPRKGFTSKYAKFSPKGTYLFSIHPQGIQSWGGANFNSIKRFFHQQVRLVDFSPNEKFMVTLSPIPISLPDSTVDRAQFPFGPESEGHKLVIWNMITGEPVRTFALPPHLEGQKEMPWPLVKWSYDDKYCARQGPDALAIYETESNFQLLDKKLVKVDGIQDFEWAPAGVKLHNSKAVDGKHVLSYWTPESTNQTARVALMQIPSREILRTVNLFQVSDCKMHWQSNGKLLCVKVDRHTKSGKTIFSNLEFFKTNERDIPVEKLELKDVVVNFAWEPNTERFITISRLDDGNPNPAIPKNTISFYAPEVTKGGVNHNSKKKGGAAIAAAVAAAAINNQSSTKYKAYTKIENKHSNTIFWSPKGRYVVVATISRTSGELEFFDVSFDDETNKKSLPANVKLLKTDKFSGMTNISWDPSGRFVAAWSTSWLHAIENGYRLYEFTGNLLRDDSIDQFKDFVWRPRPPSLLTNSDKKKVRSNLREYSAQFEEADAMEADAAVKEIILARRKALEEWRKYRAKHISKQGNSKNEVQAEIIEEIKEEIIEEKEEIVE</sequence>
<name>EIF3B_CANAL</name>
<keyword id="KW-0963">Cytoplasm</keyword>
<keyword id="KW-0396">Initiation factor</keyword>
<keyword id="KW-0648">Protein biosynthesis</keyword>
<keyword id="KW-1185">Reference proteome</keyword>
<keyword id="KW-0677">Repeat</keyword>
<keyword id="KW-0694">RNA-binding</keyword>
<keyword id="KW-0853">WD repeat</keyword>
<comment type="function">
    <text evidence="1">RNA-binding component of the eukaryotic translation initiation factor 3 (eIF-3) complex, which is involved in protein synthesis of a specialized repertoire of mRNAs and, together with other initiation factors, stimulates binding of mRNA and methionyl-tRNAi to the 40S ribosome. The eIF-3 complex specifically targets and initiates translation of a subset of mRNAs involved in cell proliferation.</text>
</comment>
<comment type="subunit">
    <text evidence="1">Component of the eukaryotic translation initiation factor 3 (eIF-3) complex.</text>
</comment>
<comment type="subcellular location">
    <subcellularLocation>
        <location evidence="1">Cytoplasm</location>
    </subcellularLocation>
</comment>
<comment type="similarity">
    <text evidence="1">Belongs to the eIF-3 subunit B family.</text>
</comment>
<accession>Q5AGV4</accession>
<accession>A0A1D8PQU8</accession>
<accession>Q3MPJ5</accession>
<proteinExistence type="inferred from homology"/>
<organism>
    <name type="scientific">Candida albicans (strain SC5314 / ATCC MYA-2876)</name>
    <name type="common">Yeast</name>
    <dbReference type="NCBI Taxonomy" id="237561"/>
    <lineage>
        <taxon>Eukaryota</taxon>
        <taxon>Fungi</taxon>
        <taxon>Dikarya</taxon>
        <taxon>Ascomycota</taxon>
        <taxon>Saccharomycotina</taxon>
        <taxon>Pichiomycetes</taxon>
        <taxon>Debaryomycetaceae</taxon>
        <taxon>Candida/Lodderomyces clade</taxon>
        <taxon>Candida</taxon>
    </lineage>
</organism>